<comment type="function">
    <text evidence="1">Plays an important role in the cellular response to the nitrogen source. URE2 gene plays a major part in the repression of GLN1 and GDH2 genes by glutamine, and is required for the inactivation of glutamine synthetase. URE2 gene product may catalytically inactivate GLN3 in response to an increase in the intracellular concentration of glutamine (By similarity).</text>
</comment>
<comment type="subunit">
    <text evidence="1">Homodimer.</text>
</comment>
<comment type="similarity">
    <text evidence="3">Belongs to the GST superfamily.</text>
</comment>
<reference key="1">
    <citation type="submission" date="2001-08" db="EMBL/GenBank/DDBJ databases">
        <title>Prion characteristics of the URE2 protein of various yeast species.</title>
        <authorList>
            <person name="Fernandez-Bellot E."/>
            <person name="Baudin-Baillieu A."/>
            <person name="Cullin C."/>
        </authorList>
    </citation>
    <scope>NUCLEOTIDE SEQUENCE [GENOMIC DNA]</scope>
</reference>
<reference key="2">
    <citation type="journal article" date="2002" name="Proc. Natl. Acad. Sci. U.S.A.">
        <title>Conservation of a portion of the S. cerevisiae Ure2p prion domain that interacts with the full-length protein.</title>
        <authorList>
            <person name="Edskes H.K."/>
            <person name="Wickner R.B."/>
        </authorList>
    </citation>
    <scope>NUCLEOTIDE SEQUENCE [GENOMIC DNA]</scope>
    <source>
        <strain>Darlington</strain>
    </source>
</reference>
<reference key="3">
    <citation type="journal article" date="2004" name="Proc. Natl. Acad. Sci. U.S.A.">
        <title>The diploid genome sequence of Candida albicans.</title>
        <authorList>
            <person name="Jones T."/>
            <person name="Federspiel N.A."/>
            <person name="Chibana H."/>
            <person name="Dungan J."/>
            <person name="Kalman S."/>
            <person name="Magee B.B."/>
            <person name="Newport G."/>
            <person name="Thorstenson Y.R."/>
            <person name="Agabian N."/>
            <person name="Magee P.T."/>
            <person name="Davis R.W."/>
            <person name="Scherer S."/>
        </authorList>
    </citation>
    <scope>NUCLEOTIDE SEQUENCE [LARGE SCALE GENOMIC DNA]</scope>
    <source>
        <strain>SC5314 / ATCC MYA-2876</strain>
    </source>
</reference>
<reference key="4">
    <citation type="journal article" date="2007" name="Genome Biol.">
        <title>Assembly of the Candida albicans genome into sixteen supercontigs aligned on the eight chromosomes.</title>
        <authorList>
            <person name="van het Hoog M."/>
            <person name="Rast T.J."/>
            <person name="Martchenko M."/>
            <person name="Grindle S."/>
            <person name="Dignard D."/>
            <person name="Hogues H."/>
            <person name="Cuomo C."/>
            <person name="Berriman M."/>
            <person name="Scherer S."/>
            <person name="Magee B.B."/>
            <person name="Whiteway M."/>
            <person name="Chibana H."/>
            <person name="Nantel A."/>
            <person name="Magee P.T."/>
        </authorList>
    </citation>
    <scope>GENOME REANNOTATION</scope>
    <source>
        <strain>SC5314 / ATCC MYA-2876</strain>
    </source>
</reference>
<reference key="5">
    <citation type="journal article" date="2013" name="Genome Biol.">
        <title>Assembly of a phased diploid Candida albicans genome facilitates allele-specific measurements and provides a simple model for repeat and indel structure.</title>
        <authorList>
            <person name="Muzzey D."/>
            <person name="Schwartz K."/>
            <person name="Weissman J.S."/>
            <person name="Sherlock G."/>
        </authorList>
    </citation>
    <scope>NUCLEOTIDE SEQUENCE [LARGE SCALE GENOMIC DNA]</scope>
    <scope>GENOME REANNOTATION</scope>
    <source>
        <strain>SC5314 / ATCC MYA-2876</strain>
    </source>
</reference>
<keyword id="KW-0534">Nitrate assimilation</keyword>
<keyword id="KW-1185">Reference proteome</keyword>
<accession>Q96WL3</accession>
<accession>A0A1D8PHB4</accession>
<accession>Q59LH8</accession>
<organism>
    <name type="scientific">Candida albicans (strain SC5314 / ATCC MYA-2876)</name>
    <name type="common">Yeast</name>
    <dbReference type="NCBI Taxonomy" id="237561"/>
    <lineage>
        <taxon>Eukaryota</taxon>
        <taxon>Fungi</taxon>
        <taxon>Dikarya</taxon>
        <taxon>Ascomycota</taxon>
        <taxon>Saccharomycotina</taxon>
        <taxon>Pichiomycetes</taxon>
        <taxon>Debaryomycetaceae</taxon>
        <taxon>Candida/Lodderomyces clade</taxon>
        <taxon>Candida</taxon>
    </lineage>
</organism>
<name>URE2_CANAL</name>
<gene>
    <name type="primary">URE2</name>
    <name type="ordered locus">CAALFM_C204710CA</name>
    <name type="ORF">CaO19.155</name>
    <name type="ORF">CaO19.7794</name>
</gene>
<proteinExistence type="inferred from homology"/>
<sequence>MMSTDQHIQQNMNDNSNNSNNSNNNNTNNNNNNQSVNVNVNNTNNNTQTISNLSAGLKSVSLTDQQQNEVNLNLLQQQLHQEASTQQQQSRITQFFQNQPTEGFTLFSHRSAPNGFKVAIILSELNLPFNTFFLDFNNGEQRTPEFVTINPNARVPALIDHYNDNTSIWESGAITLYLVSKYLKENGECSLWSNNLIEQSQISSWLFFQTSGHAPMIGQALHFRYFHSCPVPSAVERYTDEVRRVYGVIEMALAERREALIMDLDVENAAAYSAGTTPLSQSRFFDHPVWLVGDRTTVADLSFVPWNNVVDRIGINLKVEFPEVYKWTKHMMQRPAVKRALRGD</sequence>
<dbReference type="EMBL" id="AF260777">
    <property type="protein sequence ID" value="AAK51643.2"/>
    <property type="molecule type" value="Genomic_DNA"/>
</dbReference>
<dbReference type="EMBL" id="AF525173">
    <property type="protein sequence ID" value="AAM91946.1"/>
    <property type="molecule type" value="Genomic_DNA"/>
</dbReference>
<dbReference type="EMBL" id="CP017624">
    <property type="protein sequence ID" value="AOW27495.1"/>
    <property type="molecule type" value="Genomic_DNA"/>
</dbReference>
<dbReference type="RefSeq" id="XP_710606.1">
    <property type="nucleotide sequence ID" value="XM_705514.2"/>
</dbReference>
<dbReference type="SMR" id="Q96WL3"/>
<dbReference type="FunCoup" id="Q96WL3">
    <property type="interactions" value="758"/>
</dbReference>
<dbReference type="STRING" id="237561.Q96WL3"/>
<dbReference type="EnsemblFungi" id="C2_04710C_A-T">
    <property type="protein sequence ID" value="C2_04710C_A-T-p1"/>
    <property type="gene ID" value="C2_04710C_A"/>
</dbReference>
<dbReference type="GeneID" id="3647795"/>
<dbReference type="KEGG" id="cal:CAALFM_C204710CA"/>
<dbReference type="CGD" id="CAL0000198677">
    <property type="gene designation" value="URE2"/>
</dbReference>
<dbReference type="VEuPathDB" id="FungiDB:C2_04710C_A"/>
<dbReference type="eggNOG" id="KOG0867">
    <property type="taxonomic scope" value="Eukaryota"/>
</dbReference>
<dbReference type="HOGENOM" id="CLU_011226_14_1_1"/>
<dbReference type="InParanoid" id="Q96WL3"/>
<dbReference type="OrthoDB" id="422574at2759"/>
<dbReference type="PRO" id="PR:Q96WL3"/>
<dbReference type="Proteomes" id="UP000000559">
    <property type="component" value="Chromosome 2"/>
</dbReference>
<dbReference type="GO" id="GO:0005737">
    <property type="term" value="C:cytoplasm"/>
    <property type="evidence" value="ECO:0000318"/>
    <property type="project" value="GO_Central"/>
</dbReference>
<dbReference type="GO" id="GO:0004602">
    <property type="term" value="F:glutathione peroxidase activity"/>
    <property type="evidence" value="ECO:0007669"/>
    <property type="project" value="EnsemblFungi"/>
</dbReference>
<dbReference type="GO" id="GO:0004364">
    <property type="term" value="F:glutathione transferase activity"/>
    <property type="evidence" value="ECO:0000318"/>
    <property type="project" value="GO_Central"/>
</dbReference>
<dbReference type="GO" id="GO:0051219">
    <property type="term" value="F:phosphoprotein binding"/>
    <property type="evidence" value="ECO:0007669"/>
    <property type="project" value="EnsemblFungi"/>
</dbReference>
<dbReference type="GO" id="GO:0003714">
    <property type="term" value="F:transcription corepressor activity"/>
    <property type="evidence" value="ECO:0000316"/>
    <property type="project" value="CGD"/>
</dbReference>
<dbReference type="GO" id="GO:0010621">
    <property type="term" value="P:negative regulation of transcription by transcription factor localization"/>
    <property type="evidence" value="ECO:0007669"/>
    <property type="project" value="EnsemblFungi"/>
</dbReference>
<dbReference type="GO" id="GO:0042128">
    <property type="term" value="P:nitrate assimilation"/>
    <property type="evidence" value="ECO:0007669"/>
    <property type="project" value="UniProtKB-KW"/>
</dbReference>
<dbReference type="GO" id="GO:0008104">
    <property type="term" value="P:protein localization"/>
    <property type="evidence" value="ECO:0000316"/>
    <property type="project" value="CGD"/>
</dbReference>
<dbReference type="GO" id="GO:0032447">
    <property type="term" value="P:protein urmylation"/>
    <property type="evidence" value="ECO:0007669"/>
    <property type="project" value="EnsemblFungi"/>
</dbReference>
<dbReference type="GO" id="GO:0006808">
    <property type="term" value="P:regulation of nitrogen utilization"/>
    <property type="evidence" value="ECO:0000316"/>
    <property type="project" value="CGD"/>
</dbReference>
<dbReference type="CDD" id="cd10293">
    <property type="entry name" value="GST_C_Ure2p"/>
    <property type="match status" value="1"/>
</dbReference>
<dbReference type="CDD" id="cd03048">
    <property type="entry name" value="GST_N_Ure2p_like"/>
    <property type="match status" value="1"/>
</dbReference>
<dbReference type="FunFam" id="1.20.1050.10:FF:000034">
    <property type="entry name" value="Transcriptional regulator URE2"/>
    <property type="match status" value="1"/>
</dbReference>
<dbReference type="Gene3D" id="1.20.1050.10">
    <property type="match status" value="1"/>
</dbReference>
<dbReference type="Gene3D" id="3.40.30.10">
    <property type="entry name" value="Glutaredoxin"/>
    <property type="match status" value="1"/>
</dbReference>
<dbReference type="InterPro" id="IPR010987">
    <property type="entry name" value="Glutathione-S-Trfase_C-like"/>
</dbReference>
<dbReference type="InterPro" id="IPR036282">
    <property type="entry name" value="Glutathione-S-Trfase_C_sf"/>
</dbReference>
<dbReference type="InterPro" id="IPR040079">
    <property type="entry name" value="Glutathione_S-Trfase"/>
</dbReference>
<dbReference type="InterPro" id="IPR004045">
    <property type="entry name" value="Glutathione_S-Trfase_N"/>
</dbReference>
<dbReference type="InterPro" id="IPR004046">
    <property type="entry name" value="GST_C"/>
</dbReference>
<dbReference type="InterPro" id="IPR036249">
    <property type="entry name" value="Thioredoxin-like_sf"/>
</dbReference>
<dbReference type="InterPro" id="IPR017298">
    <property type="entry name" value="Ure2"/>
</dbReference>
<dbReference type="PANTHER" id="PTHR44051">
    <property type="entry name" value="GLUTATHIONE S-TRANSFERASE-RELATED"/>
    <property type="match status" value="1"/>
</dbReference>
<dbReference type="PANTHER" id="PTHR44051:SF3">
    <property type="entry name" value="TRANSCRIPTIONAL REGULATOR URE2"/>
    <property type="match status" value="1"/>
</dbReference>
<dbReference type="Pfam" id="PF00043">
    <property type="entry name" value="GST_C"/>
    <property type="match status" value="1"/>
</dbReference>
<dbReference type="Pfam" id="PF02798">
    <property type="entry name" value="GST_N"/>
    <property type="match status" value="1"/>
</dbReference>
<dbReference type="PIRSF" id="PIRSF037861">
    <property type="entry name" value="Prion_URE2"/>
    <property type="match status" value="1"/>
</dbReference>
<dbReference type="SFLD" id="SFLDS00019">
    <property type="entry name" value="Glutathione_Transferase_(cytos"/>
    <property type="match status" value="1"/>
</dbReference>
<dbReference type="SFLD" id="SFLDG00358">
    <property type="entry name" value="Main_(cytGST)"/>
    <property type="match status" value="1"/>
</dbReference>
<dbReference type="SUPFAM" id="SSF47616">
    <property type="entry name" value="GST C-terminal domain-like"/>
    <property type="match status" value="1"/>
</dbReference>
<dbReference type="SUPFAM" id="SSF52833">
    <property type="entry name" value="Thioredoxin-like"/>
    <property type="match status" value="1"/>
</dbReference>
<dbReference type="PROSITE" id="PS50405">
    <property type="entry name" value="GST_CTER"/>
    <property type="match status" value="1"/>
</dbReference>
<dbReference type="PROSITE" id="PS50404">
    <property type="entry name" value="GST_NTER"/>
    <property type="match status" value="1"/>
</dbReference>
<evidence type="ECO:0000250" key="1"/>
<evidence type="ECO:0000256" key="2">
    <source>
        <dbReference type="SAM" id="MobiDB-lite"/>
    </source>
</evidence>
<evidence type="ECO:0000305" key="3"/>
<feature type="chain" id="PRO_0000186004" description="Protein URE2">
    <location>
        <begin position="1"/>
        <end position="344"/>
    </location>
</feature>
<feature type="domain" description="GST N-terminal">
    <location>
        <begin position="102"/>
        <end position="186"/>
    </location>
</feature>
<feature type="domain" description="GST C-terminal">
    <location>
        <begin position="195"/>
        <end position="344"/>
    </location>
</feature>
<feature type="region of interest" description="Disordered" evidence="2">
    <location>
        <begin position="1"/>
        <end position="49"/>
    </location>
</feature>
<feature type="compositionally biased region" description="Low complexity" evidence="2">
    <location>
        <begin position="9"/>
        <end position="49"/>
    </location>
</feature>
<protein>
    <recommendedName>
        <fullName>Protein URE2</fullName>
    </recommendedName>
</protein>